<reference key="1">
    <citation type="journal article" date="1992" name="J. Bacteriol.">
        <title>Oligopeptidase A is required for normal phage P22 development.</title>
        <authorList>
            <person name="Conlin C.A."/>
            <person name="Vimr E.R."/>
            <person name="Miller C.G."/>
        </authorList>
    </citation>
    <scope>NUCLEOTIDE SEQUENCE [GENOMIC DNA]</scope>
</reference>
<reference key="2">
    <citation type="journal article" date="2000" name="J. Bacteriol.">
        <title>Sequence of the genome of Salmonella bacteriophage P22.</title>
        <authorList>
            <person name="Vander Byl C.S."/>
            <person name="Kropinski A.M.B."/>
        </authorList>
    </citation>
    <scope>NUCLEOTIDE SEQUENCE [LARGE SCALE GENOMIC DNA]</scope>
</reference>
<reference key="3">
    <citation type="journal article" date="2003" name="J. Bacteriol.">
        <title>Corrected sequence of the bacteriophage P22 genome.</title>
        <authorList>
            <person name="Pedulla M.L."/>
            <person name="Ford M.E."/>
            <person name="Karthikeyan T."/>
            <person name="Houtz J.M."/>
            <person name="Hendrix R.W."/>
            <person name="Hatfull G.F."/>
            <person name="Poteete A.R."/>
            <person name="Gilcrease E.B."/>
            <person name="Winn-Stapley D.A."/>
            <person name="Casjens S.R."/>
        </authorList>
    </citation>
    <scope>NUCLEOTIDE SEQUENCE [LARGE SCALE GENOMIC DNA]</scope>
</reference>
<reference key="4">
    <citation type="journal article" date="1993" name="Nucleic Acids Res.">
        <title>Sequence of a DNA injection gene from Salmonella typhimurium phage P22.</title>
        <authorList>
            <person name="Adhikari P."/>
            <person name="Berget P.B."/>
        </authorList>
    </citation>
    <scope>NUCLEOTIDE SEQUENCE [GENOMIC DNA] OF 225-229</scope>
</reference>
<reference key="5">
    <citation type="journal article" date="1991" name="Virology">
        <title>Nucleotide sequence of the bacteriophage P22 genes required for DNA packaging.</title>
        <authorList>
            <person name="Eppler K."/>
            <person name="Wyckoff E."/>
            <person name="Goates J."/>
            <person name="Parr R."/>
            <person name="Casjens S."/>
        </authorList>
    </citation>
    <scope>PROTEIN SEQUENCE OF 21-31</scope>
</reference>
<reference key="6">
    <citation type="journal article" date="1977" name="J. Virol.">
        <title>E proteins of bacteriophage P22. I. Identification and ejection from wild-type and defective particles.</title>
        <authorList>
            <person name="Israel V."/>
        </authorList>
    </citation>
    <scope>SUBCELLULAR LOCATION</scope>
</reference>
<reference key="7">
    <citation type="journal article" date="2015" name="Virology">
        <title>Bacteriophage P22 ejects all of its internal proteins before its genome.</title>
        <authorList>
            <person name="Jin Y."/>
            <person name="Sdao S.M."/>
            <person name="Dover J.A."/>
            <person name="Porcek N.B."/>
            <person name="Knobler C.M."/>
            <person name="Gelbart W.M."/>
            <person name="Parent K.N."/>
        </authorList>
    </citation>
    <scope>FUNCTION</scope>
</reference>
<reference key="8">
    <citation type="journal article" date="2019" name="Nat. Microbiol.">
        <title>Structural dynamics of bacteriophage P22 infection initiation revealed by cryo-electron tomography.</title>
        <authorList>
            <person name="Wang C."/>
            <person name="Tu J."/>
            <person name="Liu J."/>
            <person name="Molineux I.J."/>
        </authorList>
    </citation>
    <scope>FUNCTION</scope>
</reference>
<reference key="9">
    <citation type="journal article" date="2018" name="Biophys. J.">
        <title>Cryo-EM Elucidation of the Structure of Bacteriophage P22 Virions after Genome Release.</title>
        <authorList>
            <person name="McNulty R."/>
            <person name="Cardone G."/>
            <person name="Gilcrease E.B."/>
            <person name="Baker T.S."/>
            <person name="Casjens S.R."/>
            <person name="Johnson J.E."/>
        </authorList>
    </citation>
    <scope>STRUCTURE BY ELECTRON MICROSCOPY (12.5 ANGSTROMS) OF THE VIRION</scope>
    <scope>FUNCTION</scope>
</reference>
<reference key="10">
    <citation type="journal article" date="2023" name="J. Mol. Biol.">
        <title>Molecular Architecture of Salmonella Typhimurium Virus P22 Genome Ejection Machinery.</title>
        <authorList>
            <person name="Iglesias S.M."/>
            <person name="Lokareddy R.K."/>
            <person name="Yang R."/>
            <person name="Li F."/>
            <person name="Yeggoni D.P."/>
            <person name="David Hou C.F."/>
            <person name="Leroux M.N."/>
            <person name="Cortines J.R."/>
            <person name="Leavitt J.C."/>
            <person name="Bird M."/>
            <person name="Casjens S.R."/>
            <person name="White S."/>
            <person name="Teschke C.M."/>
            <person name="Cingolani G."/>
        </authorList>
    </citation>
    <scope>FUNCTION</scope>
    <scope>INTERACTION WITH INTERNAL VIRION PROTEIN GP20</scope>
    <scope>SUBCELLULAR LOCATION</scope>
</reference>
<comment type="function">
    <text evidence="2 3 4 8">Inner capsid protein that plays a role in viral DNA ejection into the host cell (PubMed:26245366, PubMed:29590587). Assembles into an extracellular trans-envelope channel completed by the internal virion proteins gp7 and probably gp16 (PubMed:30886360). This channel allows the delivery of the viral genome into the cell cytoplasm (PubMed:30886360). Displays membrane-association properties, may therefore form a simple channel spanning the outer membrane (Probable).</text>
</comment>
<comment type="subunit">
    <text evidence="6">Interacts with the internal virion protein gp20; this interaction forms a tube-like structure that may allow DNA ejection through the host membranes.</text>
</comment>
<comment type="subcellular location">
    <subcellularLocation>
        <location evidence="5 8">Virion</location>
    </subcellularLocation>
</comment>
<comment type="similarity">
    <text evidence="7">Belongs to the podoviruses gp7 family.</text>
</comment>
<gene>
    <name type="primary">7</name>
</gene>
<proteinExistence type="evidence at protein level"/>
<organism>
    <name type="scientific">Salmonella phage P22</name>
    <name type="common">Bacteriophage P22</name>
    <dbReference type="NCBI Taxonomy" id="10754"/>
    <lineage>
        <taxon>Viruses</taxon>
        <taxon>Duplodnaviria</taxon>
        <taxon>Heunggongvirae</taxon>
        <taxon>Uroviricota</taxon>
        <taxon>Caudoviricetes</taxon>
        <taxon>Lederbergvirus</taxon>
    </lineage>
</organism>
<accession>Q01074</accession>
<accession>Q7PCH9</accession>
<feature type="propeptide" id="PRO_0000003374" description="Removed in mature form" evidence="1">
    <location>
        <begin position="1"/>
        <end position="20"/>
    </location>
</feature>
<feature type="chain" id="PRO_0000003375" description="Internal virion protein gp7">
    <location>
        <begin position="21"/>
        <end position="229"/>
    </location>
</feature>
<feature type="sequence conflict" description="In Ref. 1 and 2." evidence="7" ref="1 2">
    <original>Y</original>
    <variation>H</variation>
    <location>
        <position position="3"/>
    </location>
</feature>
<evidence type="ECO:0000269" key="1">
    <source>
    </source>
</evidence>
<evidence type="ECO:0000269" key="2">
    <source>
    </source>
</evidence>
<evidence type="ECO:0000269" key="3">
    <source>
    </source>
</evidence>
<evidence type="ECO:0000269" key="4">
    <source>
    </source>
</evidence>
<evidence type="ECO:0000269" key="5">
    <source>
    </source>
</evidence>
<evidence type="ECO:0000269" key="6">
    <source>
    </source>
</evidence>
<evidence type="ECO:0000305" key="7"/>
<evidence type="ECO:0000305" key="8">
    <source>
    </source>
</evidence>
<protein>
    <recommendedName>
        <fullName evidence="7">Internal virion protein gp7</fullName>
    </recommendedName>
    <alternativeName>
        <fullName>Ejection protein gp7</fullName>
        <shortName>E protein gp7</shortName>
    </alternativeName>
</protein>
<organismHost>
    <name type="scientific">Salmonella typhimurium</name>
    <dbReference type="NCBI Taxonomy" id="90371"/>
</organismHost>
<dbReference type="EMBL" id="M93985">
    <property type="protein sequence ID" value="AAA72115.1"/>
    <property type="molecule type" value="Unassigned_DNA"/>
</dbReference>
<dbReference type="EMBL" id="AF217253">
    <property type="protein sequence ID" value="AAF75053.1"/>
    <property type="molecule type" value="Genomic_DNA"/>
</dbReference>
<dbReference type="EMBL" id="BK000583">
    <property type="protein sequence ID" value="DAA00993.1"/>
    <property type="molecule type" value="Genomic_DNA"/>
</dbReference>
<dbReference type="EMBL" id="L07556">
    <property type="status" value="NOT_ANNOTATED_CDS"/>
    <property type="molecule type" value="Genomic_DNA"/>
</dbReference>
<dbReference type="PIR" id="C43330">
    <property type="entry name" value="C43330"/>
</dbReference>
<dbReference type="RefSeq" id="YP_063717.1">
    <property type="nucleotide sequence ID" value="NC_002371.2"/>
</dbReference>
<dbReference type="SMR" id="Q01074"/>
<dbReference type="TCDB" id="1.K.4.1.1">
    <property type="family name" value="the phage p22 injectisome (p22 injectisome) family"/>
</dbReference>
<dbReference type="GeneID" id="2944245"/>
<dbReference type="KEGG" id="vg:2944245"/>
<dbReference type="OrthoDB" id="14605at10239"/>
<dbReference type="Proteomes" id="UP000001795">
    <property type="component" value="Segment"/>
</dbReference>
<dbReference type="Proteomes" id="UP000007960">
    <property type="component" value="Segment"/>
</dbReference>
<dbReference type="GO" id="GO:0044423">
    <property type="term" value="C:virion component"/>
    <property type="evidence" value="ECO:0007669"/>
    <property type="project" value="UniProtKB-KW"/>
</dbReference>
<dbReference type="GO" id="GO:0099002">
    <property type="term" value="P:symbiont genome ejection through host cell envelope, short tail mechanism"/>
    <property type="evidence" value="ECO:0000314"/>
    <property type="project" value="UniProtKB"/>
</dbReference>
<keyword id="KW-0903">Direct protein sequencing</keyword>
<keyword id="KW-0426">Late protein</keyword>
<keyword id="KW-1185">Reference proteome</keyword>
<keyword id="KW-1171">Viral genome ejection through host cell envelope</keyword>
<keyword id="KW-1162">Viral penetration into host cytoplasm</keyword>
<keyword id="KW-0946">Virion</keyword>
<keyword id="KW-1160">Virus entry into host cell</keyword>
<name>GP7_BPP22</name>
<sequence length="229" mass="23433">MLYAFTLGRKLRGEEPSYPEKGGKGGADKSAKYAAEAQKYAADLQNQQFNTIMNNLKPFTPLADKYIGSLEGLSSLEGQGQALNNYYNSQQYQDLAGQARYQNLAAAEATGGLGSTATSNQLSAIAPTLGQQWLSGQMNNYQNLANIGLGALQGQANAGQTYANNMSQISQQSAALAAANANRPSAMQSAIGGGASGAIAGAGLAKLIGSSTPWGAAIGGGIGLLGSLF</sequence>